<name>Y1828_METM6</name>
<proteinExistence type="inferred from homology"/>
<sequence>MNITTQDKFEEMEIEKTLGLVRGSTIRTKNIGYDLIASLRTIVGGEIPEYTKMMDESREEALKRMYREAQRRGADAVVGVRFETSSILAGSAEFLCYGTAVKLKNNIQLNFK</sequence>
<reference key="1">
    <citation type="submission" date="2007-10" db="EMBL/GenBank/DDBJ databases">
        <title>Complete sequence of Methanococcus maripaludis C6.</title>
        <authorList>
            <consortium name="US DOE Joint Genome Institute"/>
            <person name="Copeland A."/>
            <person name="Lucas S."/>
            <person name="Lapidus A."/>
            <person name="Barry K."/>
            <person name="Glavina del Rio T."/>
            <person name="Dalin E."/>
            <person name="Tice H."/>
            <person name="Pitluck S."/>
            <person name="Clum A."/>
            <person name="Schmutz J."/>
            <person name="Larimer F."/>
            <person name="Land M."/>
            <person name="Hauser L."/>
            <person name="Kyrpides N."/>
            <person name="Mikhailova N."/>
            <person name="Sieprawska-Lupa M."/>
            <person name="Whitman W.B."/>
            <person name="Richardson P."/>
        </authorList>
    </citation>
    <scope>NUCLEOTIDE SEQUENCE [LARGE SCALE GENOMIC DNA]</scope>
    <source>
        <strain>C6 / ATCC BAA-1332</strain>
    </source>
</reference>
<evidence type="ECO:0000255" key="1">
    <source>
        <dbReference type="HAMAP-Rule" id="MF_00338"/>
    </source>
</evidence>
<comment type="similarity">
    <text evidence="1">Belongs to the UPF0145 family.</text>
</comment>
<gene>
    <name type="ordered locus">MmarC6_1828</name>
</gene>
<protein>
    <recommendedName>
        <fullName evidence="1">UPF0145 protein MmarC6_1828</fullName>
    </recommendedName>
</protein>
<dbReference type="EMBL" id="CP000867">
    <property type="protein sequence ID" value="ABX02638.1"/>
    <property type="molecule type" value="Genomic_DNA"/>
</dbReference>
<dbReference type="SMR" id="A9ABB5"/>
<dbReference type="STRING" id="444158.MmarC6_1828"/>
<dbReference type="KEGG" id="mmx:MmarC6_1828"/>
<dbReference type="eggNOG" id="arCOG02287">
    <property type="taxonomic scope" value="Archaea"/>
</dbReference>
<dbReference type="HOGENOM" id="CLU_117144_1_2_2"/>
<dbReference type="OrthoDB" id="59443at2157"/>
<dbReference type="PhylomeDB" id="A9ABB5"/>
<dbReference type="Gene3D" id="3.30.110.70">
    <property type="entry name" value="Hypothetical protein apc22750. Chain B"/>
    <property type="match status" value="1"/>
</dbReference>
<dbReference type="HAMAP" id="MF_00338">
    <property type="entry name" value="UPF0145"/>
    <property type="match status" value="1"/>
</dbReference>
<dbReference type="InterPro" id="IPR035439">
    <property type="entry name" value="UPF0145_dom_sf"/>
</dbReference>
<dbReference type="InterPro" id="IPR002765">
    <property type="entry name" value="UPF0145_YbjQ-like"/>
</dbReference>
<dbReference type="PANTHER" id="PTHR34068:SF2">
    <property type="entry name" value="UPF0145 PROTEIN SCO3412"/>
    <property type="match status" value="1"/>
</dbReference>
<dbReference type="PANTHER" id="PTHR34068">
    <property type="entry name" value="UPF0145 PROTEIN YBJQ"/>
    <property type="match status" value="1"/>
</dbReference>
<dbReference type="Pfam" id="PF01906">
    <property type="entry name" value="YbjQ_1"/>
    <property type="match status" value="1"/>
</dbReference>
<dbReference type="SUPFAM" id="SSF117782">
    <property type="entry name" value="YbjQ-like"/>
    <property type="match status" value="1"/>
</dbReference>
<accession>A9ABB5</accession>
<organism>
    <name type="scientific">Methanococcus maripaludis (strain C6 / ATCC BAA-1332)</name>
    <dbReference type="NCBI Taxonomy" id="444158"/>
    <lineage>
        <taxon>Archaea</taxon>
        <taxon>Methanobacteriati</taxon>
        <taxon>Methanobacteriota</taxon>
        <taxon>Methanomada group</taxon>
        <taxon>Methanococci</taxon>
        <taxon>Methanococcales</taxon>
        <taxon>Methanococcaceae</taxon>
        <taxon>Methanococcus</taxon>
    </lineage>
</organism>
<feature type="chain" id="PRO_1000120005" description="UPF0145 protein MmarC6_1828">
    <location>
        <begin position="1"/>
        <end position="112"/>
    </location>
</feature>